<organism>
    <name type="scientific">Acanthamoeba polyphaga mimivirus</name>
    <name type="common">APMV</name>
    <dbReference type="NCBI Taxonomy" id="212035"/>
    <lineage>
        <taxon>Viruses</taxon>
        <taxon>Varidnaviria</taxon>
        <taxon>Bamfordvirae</taxon>
        <taxon>Nucleocytoviricota</taxon>
        <taxon>Megaviricetes</taxon>
        <taxon>Imitervirales</taxon>
        <taxon>Mimiviridae</taxon>
        <taxon>Megamimivirinae</taxon>
        <taxon>Mimivirus</taxon>
        <taxon>Mimivirus bradfordmassiliense</taxon>
    </lineage>
</organism>
<accession>Q5UPL0</accession>
<proteinExistence type="inferred from homology"/>
<reference key="1">
    <citation type="journal article" date="2004" name="Science">
        <title>The 1.2-megabase genome sequence of Mimivirus.</title>
        <authorList>
            <person name="Raoult D."/>
            <person name="Audic S."/>
            <person name="Robert C."/>
            <person name="Abergel C."/>
            <person name="Renesto P."/>
            <person name="Ogata H."/>
            <person name="La Scola B."/>
            <person name="Susan M."/>
            <person name="Claverie J.-M."/>
        </authorList>
    </citation>
    <scope>NUCLEOTIDE SEQUENCE [LARGE SCALE GENOMIC DNA]</scope>
    <source>
        <strain>Rowbotham-Bradford</strain>
    </source>
</reference>
<feature type="chain" id="PRO_0000071218" description="Uncharacterized protein L137">
    <location>
        <begin position="1"/>
        <end position="732"/>
    </location>
</feature>
<gene>
    <name type="ordered locus">MIMI_L137</name>
</gene>
<protein>
    <recommendedName>
        <fullName>Uncharacterized protein L137</fullName>
    </recommendedName>
</protein>
<keyword id="KW-1185">Reference proteome</keyword>
<comment type="similarity">
    <text evidence="1">Belongs to the mimivirus L137 family.</text>
</comment>
<name>YL137_MIMIV</name>
<dbReference type="EMBL" id="AY653733">
    <property type="protein sequence ID" value="AAV50412.1"/>
    <property type="molecule type" value="Genomic_DNA"/>
</dbReference>
<dbReference type="CAZy" id="GT2">
    <property type="family name" value="Glycosyltransferase Family 2"/>
</dbReference>
<dbReference type="KEGG" id="vg:9924737"/>
<dbReference type="Proteomes" id="UP000001134">
    <property type="component" value="Genome"/>
</dbReference>
<dbReference type="Gene3D" id="3.90.550.10">
    <property type="entry name" value="Spore Coat Polysaccharide Biosynthesis Protein SpsA, Chain A"/>
    <property type="match status" value="1"/>
</dbReference>
<dbReference type="InterPro" id="IPR029044">
    <property type="entry name" value="Nucleotide-diphossugar_trans"/>
</dbReference>
<dbReference type="SUPFAM" id="SSF53448">
    <property type="entry name" value="Nucleotide-diphospho-sugar transferases"/>
    <property type="match status" value="1"/>
</dbReference>
<organismHost>
    <name type="scientific">Acanthamoeba polyphaga</name>
    <name type="common">Amoeba</name>
    <dbReference type="NCBI Taxonomy" id="5757"/>
</organismHost>
<sequence length="732" mass="85621">MHKIPCFVLIYEQFDIIKKCLTFLTKYAHRLHIVIIENYSVNTNQQIKPYVMDLLEKGIICKYYLFEENIANNAVHIVLEEAIAKYLDPTVFPYVFVTDGDLTIEDTNWIDEHVNIMDKHKNVFICGCSLDNSNLPTKTMPNAVHWIKPGIDQGDYIKGITGTTFTLHRTNELIEAIKFFNSKGWRYLDSNLHKFCFDAKRMIWARTKKAKCYHLTWDLYLDLTHPYTIMKLKNVNTMWKRSQSSKFQLYENSSDLRLDIYQELNDTKETIIVRKLKVISSGFDLGLDQSGIEYNGIFYPASRGFTVYTITDETVSVSNFDTHINSCTVNLARHIRESYRSGCHYIISVVHDDGFKKLSKNQLKEVGGLLSLDKIFYLYIRFSYYFVYDNIHKSLIDEDVSKVSFLSKEFSDLKFSKLISNNQITPSSTISNSNSQDLNIPDSTIIPLLSNNNGPITKQYHIVCLKWMLMFYREYIESFGSLLNIDYILLDNFNNYNYINSPEHVYIFCQLTDDSLLTKPFQKMILNTEQLTIAKYMDRTRKYINHGIQIIDYSIENIKLCNNPSTIYLPYQYSDSEIQILKKLYDSTPKKYDLVFCGSISQRRRYILDSLKSHGVSILELVTGHWGHPRDVEMASCKMLINIHYAHDYNIYESMRCDRWAFATMPVVSEDSIHYGLLDVKKHGLITFCEYDQLILKTLEALKNFKKTNENIINTVKKEREHQLIKVFTELK</sequence>
<evidence type="ECO:0000305" key="1"/>